<sequence>MTDLLHKLNFKIADASPEYKQRRKIQMIRFFTASAVTIFASRFAYRATVSRQYIPTLFQGNHSPPLSYNFTTDAAVAVGTGTLLCGSVTGMTVFGLCWILDVSNIQEFGWRMKSMLGGWESEKKLSEAPMDEESSYIQDSLNDILDGKYDFEEDTEEVHTAEMKTK</sequence>
<reference key="1">
    <citation type="journal article" date="2009" name="Genome Res.">
        <title>Comparative genomics of the fungal pathogens Candida dubliniensis and Candida albicans.</title>
        <authorList>
            <person name="Jackson A.P."/>
            <person name="Gamble J.A."/>
            <person name="Yeomans T."/>
            <person name="Moran G.P."/>
            <person name="Saunders D."/>
            <person name="Harris D."/>
            <person name="Aslett M."/>
            <person name="Barrell J.F."/>
            <person name="Butler G."/>
            <person name="Citiulo F."/>
            <person name="Coleman D.C."/>
            <person name="de Groot P.W.J."/>
            <person name="Goodwin T.J."/>
            <person name="Quail M.A."/>
            <person name="McQuillan J."/>
            <person name="Munro C.A."/>
            <person name="Pain A."/>
            <person name="Poulter R.T."/>
            <person name="Rajandream M.A."/>
            <person name="Renauld H."/>
            <person name="Spiering M.J."/>
            <person name="Tivey A."/>
            <person name="Gow N.A.R."/>
            <person name="Barrell B."/>
            <person name="Sullivan D.J."/>
            <person name="Berriman M."/>
        </authorList>
    </citation>
    <scope>NUCLEOTIDE SEQUENCE [LARGE SCALE GENOMIC DNA]</scope>
    <source>
        <strain>CD36 / ATCC MYA-646 / CBS 7987 / NCPF 3949 / NRRL Y-17841</strain>
    </source>
</reference>
<keyword id="KW-0472">Membrane</keyword>
<keyword id="KW-0812">Transmembrane</keyword>
<keyword id="KW-1133">Transmembrane helix</keyword>
<feature type="chain" id="PRO_0000405643" description="Altered inheritance of mitochondria protein 11">
    <location>
        <begin position="1"/>
        <end position="166"/>
    </location>
</feature>
<feature type="transmembrane region" description="Helical" evidence="1">
    <location>
        <begin position="27"/>
        <end position="49"/>
    </location>
</feature>
<feature type="transmembrane region" description="Helical" evidence="1">
    <location>
        <begin position="78"/>
        <end position="100"/>
    </location>
</feature>
<dbReference type="EMBL" id="FM992690">
    <property type="protein sequence ID" value="CAX42607.1"/>
    <property type="molecule type" value="Genomic_DNA"/>
</dbReference>
<dbReference type="RefSeq" id="XP_002419025.1">
    <property type="nucleotide sequence ID" value="XM_002418980.1"/>
</dbReference>
<dbReference type="SMR" id="B9WD58"/>
<dbReference type="GeneID" id="8046807"/>
<dbReference type="KEGG" id="cdu:CD36_80770"/>
<dbReference type="CGD" id="CAL0000170759">
    <property type="gene designation" value="Cd36_80770"/>
</dbReference>
<dbReference type="VEuPathDB" id="FungiDB:CD36_80770"/>
<dbReference type="eggNOG" id="ENOG502SAK0">
    <property type="taxonomic scope" value="Eukaryota"/>
</dbReference>
<dbReference type="HOGENOM" id="CLU_118700_0_0_1"/>
<dbReference type="OrthoDB" id="4088121at2759"/>
<dbReference type="Proteomes" id="UP000002605">
    <property type="component" value="Chromosome 3"/>
</dbReference>
<dbReference type="GO" id="GO:0016020">
    <property type="term" value="C:membrane"/>
    <property type="evidence" value="ECO:0007669"/>
    <property type="project" value="UniProtKB-SubCell"/>
</dbReference>
<dbReference type="GO" id="GO:0005739">
    <property type="term" value="C:mitochondrion"/>
    <property type="evidence" value="ECO:0007669"/>
    <property type="project" value="TreeGrafter"/>
</dbReference>
<dbReference type="InterPro" id="IPR038814">
    <property type="entry name" value="AIM11"/>
</dbReference>
<dbReference type="PANTHER" id="PTHR39136">
    <property type="entry name" value="ALTERED INHERITANCE OF MITOCHONDRIA PROTEIN 11"/>
    <property type="match status" value="1"/>
</dbReference>
<dbReference type="PANTHER" id="PTHR39136:SF1">
    <property type="entry name" value="ALTERED INHERITANCE OF MITOCHONDRIA PROTEIN 11"/>
    <property type="match status" value="1"/>
</dbReference>
<evidence type="ECO:0000255" key="1"/>
<evidence type="ECO:0000305" key="2"/>
<gene>
    <name type="primary">AIM11</name>
    <name type="ORF">CD36_80770</name>
</gene>
<name>AIM11_CANDC</name>
<protein>
    <recommendedName>
        <fullName>Altered inheritance of mitochondria protein 11</fullName>
    </recommendedName>
</protein>
<organism>
    <name type="scientific">Candida dubliniensis (strain CD36 / ATCC MYA-646 / CBS 7987 / NCPF 3949 / NRRL Y-17841)</name>
    <name type="common">Yeast</name>
    <dbReference type="NCBI Taxonomy" id="573826"/>
    <lineage>
        <taxon>Eukaryota</taxon>
        <taxon>Fungi</taxon>
        <taxon>Dikarya</taxon>
        <taxon>Ascomycota</taxon>
        <taxon>Saccharomycotina</taxon>
        <taxon>Pichiomycetes</taxon>
        <taxon>Debaryomycetaceae</taxon>
        <taxon>Candida/Lodderomyces clade</taxon>
        <taxon>Candida</taxon>
    </lineage>
</organism>
<proteinExistence type="inferred from homology"/>
<accession>B9WD58</accession>
<comment type="subcellular location">
    <subcellularLocation>
        <location evidence="2">Membrane</location>
        <topology evidence="2">Multi-pass membrane protein</topology>
    </subcellularLocation>
</comment>
<comment type="similarity">
    <text evidence="2">Belongs to the AIM11 family.</text>
</comment>